<keyword id="KW-0143">Chaperone</keyword>
<keyword id="KW-0963">Cytoplasm</keyword>
<keyword id="KW-1185">Reference proteome</keyword>
<reference key="1">
    <citation type="journal article" date="2008" name="Appl. Environ. Microbiol.">
        <title>The genome of Polaromonas sp. strain JS666: insights into the evolution of a hydrocarbon- and xenobiotic-degrading bacterium, and features of relevance to biotechnology.</title>
        <authorList>
            <person name="Mattes T.E."/>
            <person name="Alexander A.K."/>
            <person name="Richardson P.M."/>
            <person name="Munk A.C."/>
            <person name="Han C.S."/>
            <person name="Stothard P."/>
            <person name="Coleman N.V."/>
        </authorList>
    </citation>
    <scope>NUCLEOTIDE SEQUENCE [LARGE SCALE GENOMIC DNA]</scope>
    <source>
        <strain>JS666 / ATCC BAA-500</strain>
    </source>
</reference>
<protein>
    <recommendedName>
        <fullName evidence="1">Co-chaperonin GroES</fullName>
    </recommendedName>
    <alternativeName>
        <fullName evidence="1">10 kDa chaperonin</fullName>
    </alternativeName>
    <alternativeName>
        <fullName evidence="1">Chaperonin-10</fullName>
        <shortName evidence="1">Cpn10</shortName>
    </alternativeName>
</protein>
<comment type="function">
    <text evidence="1">Together with the chaperonin GroEL, plays an essential role in assisting protein folding. The GroEL-GroES system forms a nano-cage that allows encapsulation of the non-native substrate proteins and provides a physical environment optimized to promote and accelerate protein folding. GroES binds to the apical surface of the GroEL ring, thereby capping the opening of the GroEL channel.</text>
</comment>
<comment type="subunit">
    <text evidence="1">Heptamer of 7 subunits arranged in a ring. Interacts with the chaperonin GroEL.</text>
</comment>
<comment type="subcellular location">
    <subcellularLocation>
        <location evidence="1">Cytoplasm</location>
    </subcellularLocation>
</comment>
<comment type="similarity">
    <text evidence="1">Belongs to the GroES chaperonin family.</text>
</comment>
<accession>Q12FH6</accession>
<feature type="chain" id="PRO_1000025323" description="Co-chaperonin GroES">
    <location>
        <begin position="1"/>
        <end position="96"/>
    </location>
</feature>
<sequence>MKLRPLHDRVIVKRVENETKTASGIVIPDSAAEKPDQGEVLAVGPGKKNDKGDLSPMAVKIGDRVLFGKYSGQTVKVDGDELLVMKEEDLFAVVEK</sequence>
<name>CH10_POLSJ</name>
<gene>
    <name evidence="1" type="primary">groES</name>
    <name evidence="1" type="synonym">groS</name>
    <name type="ordered locus">Bpro_0760</name>
</gene>
<dbReference type="EMBL" id="CP000316">
    <property type="protein sequence ID" value="ABE42716.1"/>
    <property type="molecule type" value="Genomic_DNA"/>
</dbReference>
<dbReference type="RefSeq" id="WP_011481719.1">
    <property type="nucleotide sequence ID" value="NC_007948.1"/>
</dbReference>
<dbReference type="SMR" id="Q12FH6"/>
<dbReference type="STRING" id="296591.Bpro_0760"/>
<dbReference type="KEGG" id="pol:Bpro_0760"/>
<dbReference type="eggNOG" id="COG0234">
    <property type="taxonomic scope" value="Bacteria"/>
</dbReference>
<dbReference type="HOGENOM" id="CLU_132825_1_0_4"/>
<dbReference type="OrthoDB" id="9806791at2"/>
<dbReference type="Proteomes" id="UP000001983">
    <property type="component" value="Chromosome"/>
</dbReference>
<dbReference type="GO" id="GO:0005737">
    <property type="term" value="C:cytoplasm"/>
    <property type="evidence" value="ECO:0007669"/>
    <property type="project" value="UniProtKB-SubCell"/>
</dbReference>
<dbReference type="GO" id="GO:0005524">
    <property type="term" value="F:ATP binding"/>
    <property type="evidence" value="ECO:0007669"/>
    <property type="project" value="InterPro"/>
</dbReference>
<dbReference type="GO" id="GO:0046872">
    <property type="term" value="F:metal ion binding"/>
    <property type="evidence" value="ECO:0007669"/>
    <property type="project" value="TreeGrafter"/>
</dbReference>
<dbReference type="GO" id="GO:0044183">
    <property type="term" value="F:protein folding chaperone"/>
    <property type="evidence" value="ECO:0007669"/>
    <property type="project" value="InterPro"/>
</dbReference>
<dbReference type="GO" id="GO:0051087">
    <property type="term" value="F:protein-folding chaperone binding"/>
    <property type="evidence" value="ECO:0007669"/>
    <property type="project" value="TreeGrafter"/>
</dbReference>
<dbReference type="GO" id="GO:0051082">
    <property type="term" value="F:unfolded protein binding"/>
    <property type="evidence" value="ECO:0007669"/>
    <property type="project" value="TreeGrafter"/>
</dbReference>
<dbReference type="GO" id="GO:0051085">
    <property type="term" value="P:chaperone cofactor-dependent protein refolding"/>
    <property type="evidence" value="ECO:0007669"/>
    <property type="project" value="TreeGrafter"/>
</dbReference>
<dbReference type="CDD" id="cd00320">
    <property type="entry name" value="cpn10"/>
    <property type="match status" value="1"/>
</dbReference>
<dbReference type="FunFam" id="2.30.33.40:FF:000001">
    <property type="entry name" value="10 kDa chaperonin"/>
    <property type="match status" value="1"/>
</dbReference>
<dbReference type="Gene3D" id="2.30.33.40">
    <property type="entry name" value="GroES chaperonin"/>
    <property type="match status" value="1"/>
</dbReference>
<dbReference type="HAMAP" id="MF_00580">
    <property type="entry name" value="CH10"/>
    <property type="match status" value="1"/>
</dbReference>
<dbReference type="InterPro" id="IPR020818">
    <property type="entry name" value="Chaperonin_GroES"/>
</dbReference>
<dbReference type="InterPro" id="IPR037124">
    <property type="entry name" value="Chaperonin_GroES_sf"/>
</dbReference>
<dbReference type="InterPro" id="IPR018369">
    <property type="entry name" value="Chaprnonin_Cpn10_CS"/>
</dbReference>
<dbReference type="InterPro" id="IPR011032">
    <property type="entry name" value="GroES-like_sf"/>
</dbReference>
<dbReference type="NCBIfam" id="NF001527">
    <property type="entry name" value="PRK00364.1-2"/>
    <property type="match status" value="1"/>
</dbReference>
<dbReference type="NCBIfam" id="NF001529">
    <property type="entry name" value="PRK00364.1-5"/>
    <property type="match status" value="1"/>
</dbReference>
<dbReference type="NCBIfam" id="NF001531">
    <property type="entry name" value="PRK00364.2-2"/>
    <property type="match status" value="1"/>
</dbReference>
<dbReference type="NCBIfam" id="NF001533">
    <property type="entry name" value="PRK00364.2-4"/>
    <property type="match status" value="1"/>
</dbReference>
<dbReference type="NCBIfam" id="NF001534">
    <property type="entry name" value="PRK00364.2-5"/>
    <property type="match status" value="1"/>
</dbReference>
<dbReference type="PANTHER" id="PTHR10772">
    <property type="entry name" value="10 KDA HEAT SHOCK PROTEIN"/>
    <property type="match status" value="1"/>
</dbReference>
<dbReference type="PANTHER" id="PTHR10772:SF58">
    <property type="entry name" value="CO-CHAPERONIN GROES"/>
    <property type="match status" value="1"/>
</dbReference>
<dbReference type="Pfam" id="PF00166">
    <property type="entry name" value="Cpn10"/>
    <property type="match status" value="1"/>
</dbReference>
<dbReference type="PRINTS" id="PR00297">
    <property type="entry name" value="CHAPERONIN10"/>
</dbReference>
<dbReference type="SMART" id="SM00883">
    <property type="entry name" value="Cpn10"/>
    <property type="match status" value="1"/>
</dbReference>
<dbReference type="SUPFAM" id="SSF50129">
    <property type="entry name" value="GroES-like"/>
    <property type="match status" value="1"/>
</dbReference>
<dbReference type="PROSITE" id="PS00681">
    <property type="entry name" value="CHAPERONINS_CPN10"/>
    <property type="match status" value="1"/>
</dbReference>
<organism>
    <name type="scientific">Polaromonas sp. (strain JS666 / ATCC BAA-500)</name>
    <dbReference type="NCBI Taxonomy" id="296591"/>
    <lineage>
        <taxon>Bacteria</taxon>
        <taxon>Pseudomonadati</taxon>
        <taxon>Pseudomonadota</taxon>
        <taxon>Betaproteobacteria</taxon>
        <taxon>Burkholderiales</taxon>
        <taxon>Comamonadaceae</taxon>
        <taxon>Polaromonas</taxon>
    </lineage>
</organism>
<proteinExistence type="inferred from homology"/>
<evidence type="ECO:0000255" key="1">
    <source>
        <dbReference type="HAMAP-Rule" id="MF_00580"/>
    </source>
</evidence>